<name>UBD2A_XENLA</name>
<proteinExistence type="evidence at transcript level"/>
<accession>Q6IP57</accession>
<evidence type="ECO:0000256" key="1">
    <source>
        <dbReference type="SAM" id="MobiDB-lite"/>
    </source>
</evidence>
<evidence type="ECO:0000305" key="2"/>
<gene>
    <name type="primary">ubald2-a</name>
    <name type="synonym">fam100b-a</name>
</gene>
<reference key="1">
    <citation type="submission" date="2004-06" db="EMBL/GenBank/DDBJ databases">
        <authorList>
            <consortium name="NIH - Xenopus Gene Collection (XGC) project"/>
        </authorList>
    </citation>
    <scope>NUCLEOTIDE SEQUENCE [LARGE SCALE MRNA]</scope>
    <source>
        <tissue>Embryo</tissue>
    </source>
</reference>
<dbReference type="EMBL" id="BC072061">
    <property type="protein sequence ID" value="AAH72061.1"/>
    <property type="molecule type" value="mRNA"/>
</dbReference>
<dbReference type="RefSeq" id="NP_001085228.1">
    <property type="nucleotide sequence ID" value="NM_001091759.1"/>
</dbReference>
<dbReference type="SMR" id="Q6IP57"/>
<dbReference type="DNASU" id="432323"/>
<dbReference type="GeneID" id="432323"/>
<dbReference type="KEGG" id="xla:432323"/>
<dbReference type="AGR" id="Xenbase:XB-GENE-987736"/>
<dbReference type="CTD" id="432323"/>
<dbReference type="Xenbase" id="XB-GENE-987736">
    <property type="gene designation" value="ubald2.L"/>
</dbReference>
<dbReference type="OMA" id="SWGMTPP"/>
<dbReference type="OrthoDB" id="6093553at2759"/>
<dbReference type="Proteomes" id="UP000186698">
    <property type="component" value="Chromosome 9_10L"/>
</dbReference>
<dbReference type="Bgee" id="432323">
    <property type="expression patterns" value="Expressed in internal ear and 19 other cell types or tissues"/>
</dbReference>
<dbReference type="CDD" id="cd14343">
    <property type="entry name" value="UBA_F100B_like"/>
    <property type="match status" value="1"/>
</dbReference>
<dbReference type="Gene3D" id="1.10.8.10">
    <property type="entry name" value="DNA helicase RuvA subunit, C-terminal domain"/>
    <property type="match status" value="1"/>
</dbReference>
<dbReference type="InterPro" id="IPR009060">
    <property type="entry name" value="UBA-like_sf"/>
</dbReference>
<dbReference type="InterPro" id="IPR054109">
    <property type="entry name" value="UBA_8"/>
</dbReference>
<dbReference type="InterPro" id="IPR039310">
    <property type="entry name" value="UBALD1/2"/>
</dbReference>
<dbReference type="PANTHER" id="PTHR31993">
    <property type="entry name" value="UBA-LIKE DOMAIN-CONTAINING PROTEIN 2"/>
    <property type="match status" value="1"/>
</dbReference>
<dbReference type="PANTHER" id="PTHR31993:SF6">
    <property type="entry name" value="UBA-LIKE DOMAIN-CONTAINING PROTEIN 2"/>
    <property type="match status" value="1"/>
</dbReference>
<dbReference type="Pfam" id="PF22566">
    <property type="entry name" value="UBA_8"/>
    <property type="match status" value="1"/>
</dbReference>
<dbReference type="SUPFAM" id="SSF46934">
    <property type="entry name" value="UBA-like"/>
    <property type="match status" value="1"/>
</dbReference>
<comment type="similarity">
    <text evidence="2">Belongs to the UBALD family.</text>
</comment>
<organism>
    <name type="scientific">Xenopus laevis</name>
    <name type="common">African clawed frog</name>
    <dbReference type="NCBI Taxonomy" id="8355"/>
    <lineage>
        <taxon>Eukaryota</taxon>
        <taxon>Metazoa</taxon>
        <taxon>Chordata</taxon>
        <taxon>Craniata</taxon>
        <taxon>Vertebrata</taxon>
        <taxon>Euteleostomi</taxon>
        <taxon>Amphibia</taxon>
        <taxon>Batrachia</taxon>
        <taxon>Anura</taxon>
        <taxon>Pipoidea</taxon>
        <taxon>Pipidae</taxon>
        <taxon>Xenopodinae</taxon>
        <taxon>Xenopus</taxon>
        <taxon>Xenopus</taxon>
    </lineage>
</organism>
<sequence>MSVNMEDLRHQVMINQFVLAAGCAADQAKQLLQAAHWQFETALSAFFQESNVPSAQHHTHMMCTPSNTPATPPNFPDALAMFSKLRTSESLQNSSSPAASNACSPPGNFNPYWASSPPNQQPVWLPPASPTTHLHHHHHHPQPVWPPNSQPTGGPQKAMAAMDGQR</sequence>
<protein>
    <recommendedName>
        <fullName>UBA-like domain-containing protein 2-A</fullName>
    </recommendedName>
</protein>
<keyword id="KW-1185">Reference proteome</keyword>
<feature type="chain" id="PRO_0000239031" description="UBA-like domain-containing protein 2-A">
    <location>
        <begin position="1"/>
        <end position="166"/>
    </location>
</feature>
<feature type="region of interest" description="Disordered" evidence="1">
    <location>
        <begin position="120"/>
        <end position="166"/>
    </location>
</feature>